<name>HUTU_BRUA1</name>
<protein>
    <recommendedName>
        <fullName evidence="1">Urocanate hydratase</fullName>
        <shortName evidence="1">Urocanase</shortName>
        <ecNumber evidence="1">4.2.1.49</ecNumber>
    </recommendedName>
    <alternativeName>
        <fullName evidence="1">Imidazolonepropionate hydrolase</fullName>
    </alternativeName>
</protein>
<feature type="chain" id="PRO_1000129562" description="Urocanate hydratase">
    <location>
        <begin position="1"/>
        <end position="557"/>
    </location>
</feature>
<feature type="region of interest" description="Disordered" evidence="2">
    <location>
        <begin position="1"/>
        <end position="20"/>
    </location>
</feature>
<feature type="active site" evidence="1">
    <location>
        <position position="410"/>
    </location>
</feature>
<feature type="binding site" evidence="1">
    <location>
        <begin position="52"/>
        <end position="53"/>
    </location>
    <ligand>
        <name>NAD(+)</name>
        <dbReference type="ChEBI" id="CHEBI:57540"/>
    </ligand>
</feature>
<feature type="binding site" evidence="1">
    <location>
        <position position="130"/>
    </location>
    <ligand>
        <name>NAD(+)</name>
        <dbReference type="ChEBI" id="CHEBI:57540"/>
    </ligand>
</feature>
<feature type="binding site" evidence="1">
    <location>
        <begin position="176"/>
        <end position="178"/>
    </location>
    <ligand>
        <name>NAD(+)</name>
        <dbReference type="ChEBI" id="CHEBI:57540"/>
    </ligand>
</feature>
<feature type="binding site" evidence="1">
    <location>
        <position position="196"/>
    </location>
    <ligand>
        <name>NAD(+)</name>
        <dbReference type="ChEBI" id="CHEBI:57540"/>
    </ligand>
</feature>
<feature type="binding site" evidence="1">
    <location>
        <position position="201"/>
    </location>
    <ligand>
        <name>NAD(+)</name>
        <dbReference type="ChEBI" id="CHEBI:57540"/>
    </ligand>
</feature>
<feature type="binding site" evidence="1">
    <location>
        <begin position="242"/>
        <end position="243"/>
    </location>
    <ligand>
        <name>NAD(+)</name>
        <dbReference type="ChEBI" id="CHEBI:57540"/>
    </ligand>
</feature>
<feature type="binding site" evidence="1">
    <location>
        <begin position="263"/>
        <end position="267"/>
    </location>
    <ligand>
        <name>NAD(+)</name>
        <dbReference type="ChEBI" id="CHEBI:57540"/>
    </ligand>
</feature>
<feature type="binding site" evidence="1">
    <location>
        <begin position="273"/>
        <end position="274"/>
    </location>
    <ligand>
        <name>NAD(+)</name>
        <dbReference type="ChEBI" id="CHEBI:57540"/>
    </ligand>
</feature>
<feature type="binding site" evidence="1">
    <location>
        <position position="322"/>
    </location>
    <ligand>
        <name>NAD(+)</name>
        <dbReference type="ChEBI" id="CHEBI:57540"/>
    </ligand>
</feature>
<feature type="binding site" evidence="1">
    <location>
        <position position="492"/>
    </location>
    <ligand>
        <name>NAD(+)</name>
        <dbReference type="ChEBI" id="CHEBI:57540"/>
    </ligand>
</feature>
<gene>
    <name evidence="1" type="primary">hutU</name>
    <name type="ordered locus">BAbS19_II02870</name>
</gene>
<evidence type="ECO:0000255" key="1">
    <source>
        <dbReference type="HAMAP-Rule" id="MF_00577"/>
    </source>
</evidence>
<evidence type="ECO:0000256" key="2">
    <source>
        <dbReference type="SAM" id="MobiDB-lite"/>
    </source>
</evidence>
<organism>
    <name type="scientific">Brucella abortus (strain S19)</name>
    <dbReference type="NCBI Taxonomy" id="430066"/>
    <lineage>
        <taxon>Bacteria</taxon>
        <taxon>Pseudomonadati</taxon>
        <taxon>Pseudomonadota</taxon>
        <taxon>Alphaproteobacteria</taxon>
        <taxon>Hyphomicrobiales</taxon>
        <taxon>Brucellaceae</taxon>
        <taxon>Brucella/Ochrobactrum group</taxon>
        <taxon>Brucella</taxon>
    </lineage>
</organism>
<dbReference type="EC" id="4.2.1.49" evidence="1"/>
<dbReference type="EMBL" id="CP000888">
    <property type="protein sequence ID" value="ACD73798.1"/>
    <property type="molecule type" value="Genomic_DNA"/>
</dbReference>
<dbReference type="RefSeq" id="WP_002965715.1">
    <property type="nucleotide sequence ID" value="NC_010740.1"/>
</dbReference>
<dbReference type="SMR" id="B2SD94"/>
<dbReference type="GeneID" id="93015753"/>
<dbReference type="KEGG" id="bmc:BAbS19_II02870"/>
<dbReference type="HOGENOM" id="CLU_018868_0_1_5"/>
<dbReference type="UniPathway" id="UPA00379">
    <property type="reaction ID" value="UER00550"/>
</dbReference>
<dbReference type="Proteomes" id="UP000002565">
    <property type="component" value="Chromosome 2"/>
</dbReference>
<dbReference type="GO" id="GO:0005737">
    <property type="term" value="C:cytoplasm"/>
    <property type="evidence" value="ECO:0007669"/>
    <property type="project" value="UniProtKB-SubCell"/>
</dbReference>
<dbReference type="GO" id="GO:0016153">
    <property type="term" value="F:urocanate hydratase activity"/>
    <property type="evidence" value="ECO:0007669"/>
    <property type="project" value="UniProtKB-UniRule"/>
</dbReference>
<dbReference type="GO" id="GO:0019556">
    <property type="term" value="P:L-histidine catabolic process to glutamate and formamide"/>
    <property type="evidence" value="ECO:0007669"/>
    <property type="project" value="UniProtKB-UniPathway"/>
</dbReference>
<dbReference type="GO" id="GO:0019557">
    <property type="term" value="P:L-histidine catabolic process to glutamate and formate"/>
    <property type="evidence" value="ECO:0007669"/>
    <property type="project" value="UniProtKB-UniPathway"/>
</dbReference>
<dbReference type="FunFam" id="3.40.50.10730:FF:000001">
    <property type="entry name" value="Urocanate hydratase"/>
    <property type="match status" value="1"/>
</dbReference>
<dbReference type="Gene3D" id="3.40.50.10730">
    <property type="entry name" value="Urocanase like domains"/>
    <property type="match status" value="1"/>
</dbReference>
<dbReference type="Gene3D" id="3.40.1770.10">
    <property type="entry name" value="Urocanase superfamily"/>
    <property type="match status" value="1"/>
</dbReference>
<dbReference type="HAMAP" id="MF_00577">
    <property type="entry name" value="HutU"/>
    <property type="match status" value="1"/>
</dbReference>
<dbReference type="InterPro" id="IPR055351">
    <property type="entry name" value="Urocanase"/>
</dbReference>
<dbReference type="InterPro" id="IPR023637">
    <property type="entry name" value="Urocanase-like"/>
</dbReference>
<dbReference type="InterPro" id="IPR035401">
    <property type="entry name" value="Urocanase_C"/>
</dbReference>
<dbReference type="InterPro" id="IPR038364">
    <property type="entry name" value="Urocanase_central_sf"/>
</dbReference>
<dbReference type="InterPro" id="IPR023636">
    <property type="entry name" value="Urocanase_CS"/>
</dbReference>
<dbReference type="InterPro" id="IPR035400">
    <property type="entry name" value="Urocanase_N"/>
</dbReference>
<dbReference type="InterPro" id="IPR035085">
    <property type="entry name" value="Urocanase_Rossmann-like"/>
</dbReference>
<dbReference type="InterPro" id="IPR036190">
    <property type="entry name" value="Urocanase_sf"/>
</dbReference>
<dbReference type="NCBIfam" id="TIGR01228">
    <property type="entry name" value="hutU"/>
    <property type="match status" value="1"/>
</dbReference>
<dbReference type="NCBIfam" id="NF003820">
    <property type="entry name" value="PRK05414.1"/>
    <property type="match status" value="1"/>
</dbReference>
<dbReference type="PANTHER" id="PTHR12216">
    <property type="entry name" value="UROCANATE HYDRATASE"/>
    <property type="match status" value="1"/>
</dbReference>
<dbReference type="PANTHER" id="PTHR12216:SF4">
    <property type="entry name" value="UROCANATE HYDRATASE"/>
    <property type="match status" value="1"/>
</dbReference>
<dbReference type="Pfam" id="PF01175">
    <property type="entry name" value="Urocanase"/>
    <property type="match status" value="1"/>
</dbReference>
<dbReference type="Pfam" id="PF17392">
    <property type="entry name" value="Urocanase_C"/>
    <property type="match status" value="1"/>
</dbReference>
<dbReference type="Pfam" id="PF17391">
    <property type="entry name" value="Urocanase_N"/>
    <property type="match status" value="1"/>
</dbReference>
<dbReference type="PIRSF" id="PIRSF001423">
    <property type="entry name" value="Urocanate_hydrat"/>
    <property type="match status" value="1"/>
</dbReference>
<dbReference type="SUPFAM" id="SSF111326">
    <property type="entry name" value="Urocanase"/>
    <property type="match status" value="1"/>
</dbReference>
<dbReference type="PROSITE" id="PS01233">
    <property type="entry name" value="UROCANASE"/>
    <property type="match status" value="1"/>
</dbReference>
<reference key="1">
    <citation type="journal article" date="2008" name="PLoS ONE">
        <title>Genome sequence of Brucella abortus vaccine strain S19 compared to virulent strains yields candidate virulence genes.</title>
        <authorList>
            <person name="Crasta O.R."/>
            <person name="Folkerts O."/>
            <person name="Fei Z."/>
            <person name="Mane S.P."/>
            <person name="Evans C."/>
            <person name="Martino-Catt S."/>
            <person name="Bricker B."/>
            <person name="Yu G."/>
            <person name="Du L."/>
            <person name="Sobral B.W."/>
        </authorList>
    </citation>
    <scope>NUCLEOTIDE SEQUENCE [LARGE SCALE GENOMIC DNA]</scope>
    <source>
        <strain>S19</strain>
    </source>
</reference>
<keyword id="KW-0963">Cytoplasm</keyword>
<keyword id="KW-0369">Histidine metabolism</keyword>
<keyword id="KW-0456">Lyase</keyword>
<keyword id="KW-0520">NAD</keyword>
<proteinExistence type="inferred from homology"/>
<sequence>MSNPRHNEREVRSPRGDELNAKSWLTEAPLRMLMNNLDPDVAERPHELVVYGGIGRAARTWDDFDRIVATLKTLNDNETLLVQSGKPVGVFRTHKDAPRVLIANSNLVPHWANWDHFNELDKKGLAMYGQMTAGSWIYIGAQGIVQGTYETFVEAGRQHYGGNLKGRWILTGGLGGMGGAQPLAAVMAGACCLAVECDETRADFRLRTRYVDEKTHSLDEALAKIDAWTKAGEAKSIALIGNAAEIFPELVKRGVKPDIVTDQTSAHDPVHGYLPLGWTVAEWRAKQENDPKAVEKAARASMKVQVQAMLDFWNAGIPTVDYGNNIRQMALEEGLENAFAFPGFVPAYIRPLFCRGIGPYRWAALSGDPEDIAKTDAKVKELLPDNKHLHNWLDMAKERIAFQGLPARICWVGLGDRHRLGLAFNEMVRNGELKAPIVIGRDHLDSGSVASPNRETEAMKDGSDAVSDWPLLNALLNTASGATWVSLHHGGGVGMGFSQHAGMVICCDGTEDADRRLERVLWNDPATGVMRHADAGYDIALDWARKQGLRLPAILGN</sequence>
<accession>B2SD94</accession>
<comment type="function">
    <text evidence="1">Catalyzes the conversion of urocanate to 4-imidazolone-5-propionate.</text>
</comment>
<comment type="catalytic activity">
    <reaction evidence="1">
        <text>4-imidazolone-5-propanoate = trans-urocanate + H2O</text>
        <dbReference type="Rhea" id="RHEA:13101"/>
        <dbReference type="ChEBI" id="CHEBI:15377"/>
        <dbReference type="ChEBI" id="CHEBI:17771"/>
        <dbReference type="ChEBI" id="CHEBI:77893"/>
        <dbReference type="EC" id="4.2.1.49"/>
    </reaction>
</comment>
<comment type="cofactor">
    <cofactor evidence="1">
        <name>NAD(+)</name>
        <dbReference type="ChEBI" id="CHEBI:57540"/>
    </cofactor>
    <text evidence="1">Binds 1 NAD(+) per subunit.</text>
</comment>
<comment type="pathway">
    <text evidence="1">Amino-acid degradation; L-histidine degradation into L-glutamate; N-formimidoyl-L-glutamate from L-histidine: step 2/3.</text>
</comment>
<comment type="subcellular location">
    <subcellularLocation>
        <location evidence="1">Cytoplasm</location>
    </subcellularLocation>
</comment>
<comment type="similarity">
    <text evidence="1">Belongs to the urocanase family.</text>
</comment>